<protein>
    <recommendedName>
        <fullName evidence="1">Trigger factor</fullName>
        <shortName evidence="1">TF</shortName>
        <ecNumber evidence="1">5.2.1.8</ecNumber>
    </recommendedName>
    <alternativeName>
        <fullName evidence="1">PPIase</fullName>
    </alternativeName>
</protein>
<feature type="chain" id="PRO_1000079055" description="Trigger factor">
    <location>
        <begin position="1"/>
        <end position="432"/>
    </location>
</feature>
<feature type="domain" description="PPIase FKBP-type" evidence="1">
    <location>
        <begin position="161"/>
        <end position="246"/>
    </location>
</feature>
<name>TIG_SALPB</name>
<comment type="function">
    <text evidence="1">Involved in protein export. Acts as a chaperone by maintaining the newly synthesized protein in an open conformation. Functions as a peptidyl-prolyl cis-trans isomerase.</text>
</comment>
<comment type="catalytic activity">
    <reaction evidence="1">
        <text>[protein]-peptidylproline (omega=180) = [protein]-peptidylproline (omega=0)</text>
        <dbReference type="Rhea" id="RHEA:16237"/>
        <dbReference type="Rhea" id="RHEA-COMP:10747"/>
        <dbReference type="Rhea" id="RHEA-COMP:10748"/>
        <dbReference type="ChEBI" id="CHEBI:83833"/>
        <dbReference type="ChEBI" id="CHEBI:83834"/>
        <dbReference type="EC" id="5.2.1.8"/>
    </reaction>
</comment>
<comment type="subcellular location">
    <subcellularLocation>
        <location>Cytoplasm</location>
    </subcellularLocation>
    <text evidence="1">About half TF is bound to the ribosome near the polypeptide exit tunnel while the other half is free in the cytoplasm.</text>
</comment>
<comment type="domain">
    <text evidence="1">Consists of 3 domains; the N-terminus binds the ribosome, the middle domain has PPIase activity, while the C-terminus has intrinsic chaperone activity on its own.</text>
</comment>
<comment type="similarity">
    <text evidence="1">Belongs to the FKBP-type PPIase family. Tig subfamily.</text>
</comment>
<accession>A9MWX9</accession>
<sequence length="432" mass="48050">MQVSVETTQGLGRRVTITIAADSIETAVKSELVNVAKKVRIDGFRKGKVPMNIVAQRYGASVRQDVLGDLMSRNFVDAIIKEKINPAGAPNYVPGEYKVGEDFTYSVEFEVYPEVELTGLESIEVEKPVVEVTDADVDVMLDTLRKQQATWKEKDGAADAEDRVTIDFTGSVDGEEFEGGKATDFVLAMGQGRMIPGFEDGVKGHKAGEEFTIDVTFPEEYHAENLKGKAAKFVINLKKVEERELPELTEEFIKRFGVEDGSVAGLRAEVRKNMERELKGAVRNRVKSQAIEGLVKANDIDVPAALIDSEIDVLRRQAAQRFGGNEKQALELPRELFEEQAKRRVVVGLLLGEVIRTNELKADEERVKGLIEEMASAYEDPKEVIEFYSKNKELMDNMRNVALEEQAVEAVLAKAKVSEKATSFNELMNQQA</sequence>
<proteinExistence type="inferred from homology"/>
<dbReference type="EC" id="5.2.1.8" evidence="1"/>
<dbReference type="EMBL" id="CP000886">
    <property type="protein sequence ID" value="ABX68492.1"/>
    <property type="molecule type" value="Genomic_DNA"/>
</dbReference>
<dbReference type="RefSeq" id="WP_001198403.1">
    <property type="nucleotide sequence ID" value="NC_010102.1"/>
</dbReference>
<dbReference type="BMRB" id="A9MWX9"/>
<dbReference type="SMR" id="A9MWX9"/>
<dbReference type="KEGG" id="spq:SPAB_03131"/>
<dbReference type="PATRIC" id="fig|1016998.12.peg.2953"/>
<dbReference type="HOGENOM" id="CLU_033058_2_0_6"/>
<dbReference type="BioCyc" id="SENT1016998:SPAB_RS12780-MONOMER"/>
<dbReference type="Proteomes" id="UP000008556">
    <property type="component" value="Chromosome"/>
</dbReference>
<dbReference type="GO" id="GO:0005737">
    <property type="term" value="C:cytoplasm"/>
    <property type="evidence" value="ECO:0007669"/>
    <property type="project" value="UniProtKB-SubCell"/>
</dbReference>
<dbReference type="GO" id="GO:0003755">
    <property type="term" value="F:peptidyl-prolyl cis-trans isomerase activity"/>
    <property type="evidence" value="ECO:0007669"/>
    <property type="project" value="UniProtKB-UniRule"/>
</dbReference>
<dbReference type="GO" id="GO:0044183">
    <property type="term" value="F:protein folding chaperone"/>
    <property type="evidence" value="ECO:0007669"/>
    <property type="project" value="TreeGrafter"/>
</dbReference>
<dbReference type="GO" id="GO:0043022">
    <property type="term" value="F:ribosome binding"/>
    <property type="evidence" value="ECO:0007669"/>
    <property type="project" value="TreeGrafter"/>
</dbReference>
<dbReference type="GO" id="GO:0051083">
    <property type="term" value="P:'de novo' cotranslational protein folding"/>
    <property type="evidence" value="ECO:0007669"/>
    <property type="project" value="TreeGrafter"/>
</dbReference>
<dbReference type="GO" id="GO:0051301">
    <property type="term" value="P:cell division"/>
    <property type="evidence" value="ECO:0007669"/>
    <property type="project" value="UniProtKB-KW"/>
</dbReference>
<dbReference type="GO" id="GO:0061077">
    <property type="term" value="P:chaperone-mediated protein folding"/>
    <property type="evidence" value="ECO:0007669"/>
    <property type="project" value="TreeGrafter"/>
</dbReference>
<dbReference type="GO" id="GO:0015031">
    <property type="term" value="P:protein transport"/>
    <property type="evidence" value="ECO:0007669"/>
    <property type="project" value="UniProtKB-UniRule"/>
</dbReference>
<dbReference type="GO" id="GO:0043335">
    <property type="term" value="P:protein unfolding"/>
    <property type="evidence" value="ECO:0007669"/>
    <property type="project" value="TreeGrafter"/>
</dbReference>
<dbReference type="FunFam" id="1.10.3120.10:FF:000001">
    <property type="entry name" value="Trigger factor"/>
    <property type="match status" value="1"/>
</dbReference>
<dbReference type="FunFam" id="3.10.50.40:FF:000001">
    <property type="entry name" value="Trigger factor"/>
    <property type="match status" value="1"/>
</dbReference>
<dbReference type="FunFam" id="3.30.70.1050:FF:000001">
    <property type="entry name" value="Trigger factor"/>
    <property type="match status" value="1"/>
</dbReference>
<dbReference type="Gene3D" id="3.10.50.40">
    <property type="match status" value="1"/>
</dbReference>
<dbReference type="Gene3D" id="3.30.70.1050">
    <property type="entry name" value="Trigger factor ribosome-binding domain"/>
    <property type="match status" value="1"/>
</dbReference>
<dbReference type="Gene3D" id="1.10.3120.10">
    <property type="entry name" value="Trigger factor, C-terminal domain"/>
    <property type="match status" value="1"/>
</dbReference>
<dbReference type="HAMAP" id="MF_00303">
    <property type="entry name" value="Trigger_factor_Tig"/>
    <property type="match status" value="1"/>
</dbReference>
<dbReference type="InterPro" id="IPR046357">
    <property type="entry name" value="PPIase_dom_sf"/>
</dbReference>
<dbReference type="InterPro" id="IPR001179">
    <property type="entry name" value="PPIase_FKBP_dom"/>
</dbReference>
<dbReference type="InterPro" id="IPR005215">
    <property type="entry name" value="Trig_fac"/>
</dbReference>
<dbReference type="InterPro" id="IPR008880">
    <property type="entry name" value="Trigger_fac_C"/>
</dbReference>
<dbReference type="InterPro" id="IPR037041">
    <property type="entry name" value="Trigger_fac_C_sf"/>
</dbReference>
<dbReference type="InterPro" id="IPR008881">
    <property type="entry name" value="Trigger_fac_ribosome-bd_bac"/>
</dbReference>
<dbReference type="InterPro" id="IPR036611">
    <property type="entry name" value="Trigger_fac_ribosome-bd_sf"/>
</dbReference>
<dbReference type="InterPro" id="IPR027304">
    <property type="entry name" value="Trigger_fact/SurA_dom_sf"/>
</dbReference>
<dbReference type="NCBIfam" id="TIGR00115">
    <property type="entry name" value="tig"/>
    <property type="match status" value="1"/>
</dbReference>
<dbReference type="PANTHER" id="PTHR30560">
    <property type="entry name" value="TRIGGER FACTOR CHAPERONE AND PEPTIDYL-PROLYL CIS/TRANS ISOMERASE"/>
    <property type="match status" value="1"/>
</dbReference>
<dbReference type="PANTHER" id="PTHR30560:SF3">
    <property type="entry name" value="TRIGGER FACTOR-LIKE PROTEIN TIG, CHLOROPLASTIC"/>
    <property type="match status" value="1"/>
</dbReference>
<dbReference type="Pfam" id="PF00254">
    <property type="entry name" value="FKBP_C"/>
    <property type="match status" value="1"/>
</dbReference>
<dbReference type="Pfam" id="PF05698">
    <property type="entry name" value="Trigger_C"/>
    <property type="match status" value="1"/>
</dbReference>
<dbReference type="Pfam" id="PF05697">
    <property type="entry name" value="Trigger_N"/>
    <property type="match status" value="1"/>
</dbReference>
<dbReference type="PIRSF" id="PIRSF003095">
    <property type="entry name" value="Trigger_factor"/>
    <property type="match status" value="1"/>
</dbReference>
<dbReference type="SUPFAM" id="SSF54534">
    <property type="entry name" value="FKBP-like"/>
    <property type="match status" value="1"/>
</dbReference>
<dbReference type="SUPFAM" id="SSF109998">
    <property type="entry name" value="Triger factor/SurA peptide-binding domain-like"/>
    <property type="match status" value="1"/>
</dbReference>
<dbReference type="SUPFAM" id="SSF102735">
    <property type="entry name" value="Trigger factor ribosome-binding domain"/>
    <property type="match status" value="1"/>
</dbReference>
<dbReference type="PROSITE" id="PS50059">
    <property type="entry name" value="FKBP_PPIASE"/>
    <property type="match status" value="1"/>
</dbReference>
<organism>
    <name type="scientific">Salmonella paratyphi B (strain ATCC BAA-1250 / SPB7)</name>
    <dbReference type="NCBI Taxonomy" id="1016998"/>
    <lineage>
        <taxon>Bacteria</taxon>
        <taxon>Pseudomonadati</taxon>
        <taxon>Pseudomonadota</taxon>
        <taxon>Gammaproteobacteria</taxon>
        <taxon>Enterobacterales</taxon>
        <taxon>Enterobacteriaceae</taxon>
        <taxon>Salmonella</taxon>
    </lineage>
</organism>
<reference key="1">
    <citation type="submission" date="2007-11" db="EMBL/GenBank/DDBJ databases">
        <authorList>
            <consortium name="The Salmonella enterica serovar Paratyphi B Genome Sequencing Project"/>
            <person name="McClelland M."/>
            <person name="Sanderson E.K."/>
            <person name="Porwollik S."/>
            <person name="Spieth J."/>
            <person name="Clifton W.S."/>
            <person name="Fulton R."/>
            <person name="Cordes M."/>
            <person name="Wollam A."/>
            <person name="Shah N."/>
            <person name="Pepin K."/>
            <person name="Bhonagiri V."/>
            <person name="Nash W."/>
            <person name="Johnson M."/>
            <person name="Thiruvilangam P."/>
            <person name="Wilson R."/>
        </authorList>
    </citation>
    <scope>NUCLEOTIDE SEQUENCE [LARGE SCALE GENOMIC DNA]</scope>
    <source>
        <strain>ATCC BAA-1250 / SPB7</strain>
    </source>
</reference>
<keyword id="KW-0131">Cell cycle</keyword>
<keyword id="KW-0132">Cell division</keyword>
<keyword id="KW-0143">Chaperone</keyword>
<keyword id="KW-0963">Cytoplasm</keyword>
<keyword id="KW-0413">Isomerase</keyword>
<keyword id="KW-0697">Rotamase</keyword>
<evidence type="ECO:0000255" key="1">
    <source>
        <dbReference type="HAMAP-Rule" id="MF_00303"/>
    </source>
</evidence>
<gene>
    <name evidence="1" type="primary">tig</name>
    <name type="ordered locus">SPAB_03131</name>
</gene>